<comment type="function">
    <text evidence="1">With S4 and S5 plays an important role in translational accuracy.</text>
</comment>
<comment type="function">
    <text evidence="1">Interacts with and stabilizes bases of the 16S rRNA that are involved in tRNA selection in the A site and with the mRNA backbone. Located at the interface of the 30S and 50S subunits, it traverses the body of the 30S subunit contacting proteins on the other side and probably holding the rRNA structure together. The combined cluster of proteins S8, S12 and S17 appears to hold together the shoulder and platform of the 30S subunit (By similarity).</text>
</comment>
<comment type="subunit">
    <text evidence="1">Part of the 30S ribosomal subunit. Contacts proteins S8 and S17. May interact with IF1 in the 30S initiation complex (By similarity).</text>
</comment>
<comment type="similarity">
    <text evidence="2">Belongs to the universal ribosomal protein uS12 family.</text>
</comment>
<organism>
    <name type="scientific">Escherichia coli O157:H7</name>
    <dbReference type="NCBI Taxonomy" id="83334"/>
    <lineage>
        <taxon>Bacteria</taxon>
        <taxon>Pseudomonadati</taxon>
        <taxon>Pseudomonadota</taxon>
        <taxon>Gammaproteobacteria</taxon>
        <taxon>Enterobacterales</taxon>
        <taxon>Enterobacteriaceae</taxon>
        <taxon>Escherichia</taxon>
    </lineage>
</organism>
<reference key="1">
    <citation type="journal article" date="2001" name="Nature">
        <title>Genome sequence of enterohaemorrhagic Escherichia coli O157:H7.</title>
        <authorList>
            <person name="Perna N.T."/>
            <person name="Plunkett G. III"/>
            <person name="Burland V."/>
            <person name="Mau B."/>
            <person name="Glasner J.D."/>
            <person name="Rose D.J."/>
            <person name="Mayhew G.F."/>
            <person name="Evans P.S."/>
            <person name="Gregor J."/>
            <person name="Kirkpatrick H.A."/>
            <person name="Posfai G."/>
            <person name="Hackett J."/>
            <person name="Klink S."/>
            <person name="Boutin A."/>
            <person name="Shao Y."/>
            <person name="Miller L."/>
            <person name="Grotbeck E.J."/>
            <person name="Davis N.W."/>
            <person name="Lim A."/>
            <person name="Dimalanta E.T."/>
            <person name="Potamousis K."/>
            <person name="Apodaca J."/>
            <person name="Anantharaman T.S."/>
            <person name="Lin J."/>
            <person name="Yen G."/>
            <person name="Schwartz D.C."/>
            <person name="Welch R.A."/>
            <person name="Blattner F.R."/>
        </authorList>
    </citation>
    <scope>NUCLEOTIDE SEQUENCE [LARGE SCALE GENOMIC DNA]</scope>
    <source>
        <strain>O157:H7 / EDL933 / ATCC 700927 / EHEC</strain>
    </source>
</reference>
<reference key="2">
    <citation type="journal article" date="2001" name="DNA Res.">
        <title>Complete genome sequence of enterohemorrhagic Escherichia coli O157:H7 and genomic comparison with a laboratory strain K-12.</title>
        <authorList>
            <person name="Hayashi T."/>
            <person name="Makino K."/>
            <person name="Ohnishi M."/>
            <person name="Kurokawa K."/>
            <person name="Ishii K."/>
            <person name="Yokoyama K."/>
            <person name="Han C.-G."/>
            <person name="Ohtsubo E."/>
            <person name="Nakayama K."/>
            <person name="Murata T."/>
            <person name="Tanaka M."/>
            <person name="Tobe T."/>
            <person name="Iida T."/>
            <person name="Takami H."/>
            <person name="Honda T."/>
            <person name="Sasakawa C."/>
            <person name="Ogasawara N."/>
            <person name="Yasunaga T."/>
            <person name="Kuhara S."/>
            <person name="Shiba T."/>
            <person name="Hattori M."/>
            <person name="Shinagawa H."/>
        </authorList>
    </citation>
    <scope>NUCLEOTIDE SEQUENCE [LARGE SCALE GENOMIC DNA]</scope>
    <source>
        <strain>O157:H7 / Sakai / RIMD 0509952 / EHEC</strain>
    </source>
</reference>
<sequence>MATVNQLVRKPRARKVAKSNVPALEACPQKRGVCTRVYTTTPKKPNSALRKVCRVRLTNGFEVTSYIGGEGHNLQEHSVILIRGGRVKDLPGVRYHTVRGALDCSGVKDRKQARSKYGVKRPKA</sequence>
<protein>
    <recommendedName>
        <fullName evidence="2">Small ribosomal subunit protein uS12</fullName>
    </recommendedName>
    <alternativeName>
        <fullName>30S ribosomal protein S12</fullName>
    </alternativeName>
</protein>
<gene>
    <name type="primary">rpsL</name>
    <name type="synonym">strA</name>
    <name type="ordered locus">Z4700</name>
    <name type="ordered locus">ECs4193</name>
</gene>
<keyword id="KW-0007">Acetylation</keyword>
<keyword id="KW-0488">Methylation</keyword>
<keyword id="KW-1185">Reference proteome</keyword>
<keyword id="KW-0687">Ribonucleoprotein</keyword>
<keyword id="KW-0689">Ribosomal protein</keyword>
<keyword id="KW-0694">RNA-binding</keyword>
<keyword id="KW-0699">rRNA-binding</keyword>
<keyword id="KW-0820">tRNA-binding</keyword>
<accession>P0A7S5</accession>
<accession>P02367</accession>
<accession>Q9F5N3</accession>
<feature type="initiator methionine" description="Removed" evidence="1">
    <location>
        <position position="1"/>
    </location>
</feature>
<feature type="chain" id="PRO_0000146221" description="Small ribosomal subunit protein uS12">
    <location>
        <begin position="2"/>
        <end position="124"/>
    </location>
</feature>
<feature type="modified residue" description="3-methylthioaspartic acid" evidence="1">
    <location>
        <position position="89"/>
    </location>
</feature>
<feature type="modified residue" description="N6-acetyllysine" evidence="1">
    <location>
        <position position="108"/>
    </location>
</feature>
<dbReference type="EMBL" id="AE005174">
    <property type="protein sequence ID" value="AAG58449.1"/>
    <property type="molecule type" value="Genomic_DNA"/>
</dbReference>
<dbReference type="EMBL" id="BA000007">
    <property type="protein sequence ID" value="BAB37616.1"/>
    <property type="molecule type" value="Genomic_DNA"/>
</dbReference>
<dbReference type="PIR" id="A98153">
    <property type="entry name" value="A98153"/>
</dbReference>
<dbReference type="PIR" id="E85998">
    <property type="entry name" value="E85998"/>
</dbReference>
<dbReference type="RefSeq" id="NP_312220.1">
    <property type="nucleotide sequence ID" value="NC_002695.1"/>
</dbReference>
<dbReference type="RefSeq" id="WP_000246815.1">
    <property type="nucleotide sequence ID" value="NZ_VOAI01000004.1"/>
</dbReference>
<dbReference type="SMR" id="P0A7S5"/>
<dbReference type="STRING" id="155864.Z4700"/>
<dbReference type="GeneID" id="915954"/>
<dbReference type="GeneID" id="98390450"/>
<dbReference type="KEGG" id="ece:Z4700"/>
<dbReference type="KEGG" id="ecs:ECs_4193"/>
<dbReference type="PATRIC" id="fig|386585.9.peg.4376"/>
<dbReference type="eggNOG" id="COG0048">
    <property type="taxonomic scope" value="Bacteria"/>
</dbReference>
<dbReference type="HOGENOM" id="CLU_104295_1_2_6"/>
<dbReference type="OMA" id="VCIRVYT"/>
<dbReference type="Proteomes" id="UP000000558">
    <property type="component" value="Chromosome"/>
</dbReference>
<dbReference type="Proteomes" id="UP000002519">
    <property type="component" value="Chromosome"/>
</dbReference>
<dbReference type="GO" id="GO:0015935">
    <property type="term" value="C:small ribosomal subunit"/>
    <property type="evidence" value="ECO:0007669"/>
    <property type="project" value="InterPro"/>
</dbReference>
<dbReference type="GO" id="GO:0019843">
    <property type="term" value="F:rRNA binding"/>
    <property type="evidence" value="ECO:0007669"/>
    <property type="project" value="UniProtKB-UniRule"/>
</dbReference>
<dbReference type="GO" id="GO:0003735">
    <property type="term" value="F:structural constituent of ribosome"/>
    <property type="evidence" value="ECO:0007669"/>
    <property type="project" value="InterPro"/>
</dbReference>
<dbReference type="GO" id="GO:0000049">
    <property type="term" value="F:tRNA binding"/>
    <property type="evidence" value="ECO:0007669"/>
    <property type="project" value="UniProtKB-UniRule"/>
</dbReference>
<dbReference type="GO" id="GO:0006412">
    <property type="term" value="P:translation"/>
    <property type="evidence" value="ECO:0007669"/>
    <property type="project" value="UniProtKB-UniRule"/>
</dbReference>
<dbReference type="CDD" id="cd03368">
    <property type="entry name" value="Ribosomal_S12"/>
    <property type="match status" value="1"/>
</dbReference>
<dbReference type="FunFam" id="2.40.50.140:FF:000001">
    <property type="entry name" value="30S ribosomal protein S12"/>
    <property type="match status" value="1"/>
</dbReference>
<dbReference type="Gene3D" id="2.40.50.140">
    <property type="entry name" value="Nucleic acid-binding proteins"/>
    <property type="match status" value="1"/>
</dbReference>
<dbReference type="HAMAP" id="MF_00403_B">
    <property type="entry name" value="Ribosomal_uS12_B"/>
    <property type="match status" value="1"/>
</dbReference>
<dbReference type="InterPro" id="IPR012340">
    <property type="entry name" value="NA-bd_OB-fold"/>
</dbReference>
<dbReference type="InterPro" id="IPR006032">
    <property type="entry name" value="Ribosomal_uS12"/>
</dbReference>
<dbReference type="InterPro" id="IPR005679">
    <property type="entry name" value="Ribosomal_uS12_bac"/>
</dbReference>
<dbReference type="NCBIfam" id="TIGR00981">
    <property type="entry name" value="rpsL_bact"/>
    <property type="match status" value="1"/>
</dbReference>
<dbReference type="PANTHER" id="PTHR11652">
    <property type="entry name" value="30S RIBOSOMAL PROTEIN S12 FAMILY MEMBER"/>
    <property type="match status" value="1"/>
</dbReference>
<dbReference type="Pfam" id="PF00164">
    <property type="entry name" value="Ribosom_S12_S23"/>
    <property type="match status" value="1"/>
</dbReference>
<dbReference type="PIRSF" id="PIRSF002133">
    <property type="entry name" value="Ribosomal_S12/S23"/>
    <property type="match status" value="1"/>
</dbReference>
<dbReference type="PRINTS" id="PR01034">
    <property type="entry name" value="RIBOSOMALS12"/>
</dbReference>
<dbReference type="SUPFAM" id="SSF50249">
    <property type="entry name" value="Nucleic acid-binding proteins"/>
    <property type="match status" value="1"/>
</dbReference>
<dbReference type="PROSITE" id="PS00055">
    <property type="entry name" value="RIBOSOMAL_S12"/>
    <property type="match status" value="1"/>
</dbReference>
<evidence type="ECO:0000250" key="1"/>
<evidence type="ECO:0000305" key="2"/>
<proteinExistence type="inferred from homology"/>
<name>RS12_ECO57</name>